<dbReference type="EMBL" id="EU016717">
    <property type="protein sequence ID" value="ABU85158.1"/>
    <property type="molecule type" value="Genomic_DNA"/>
</dbReference>
<dbReference type="EMBL" id="EU273602">
    <property type="protein sequence ID" value="ABX38783.1"/>
    <property type="molecule type" value="Genomic_DNA"/>
</dbReference>
<dbReference type="RefSeq" id="YP_001586221.1">
    <property type="nucleotide sequence ID" value="NC_010093.1"/>
</dbReference>
<dbReference type="SMR" id="A9LYE0"/>
<dbReference type="GeneID" id="5777782"/>
<dbReference type="GO" id="GO:0009507">
    <property type="term" value="C:chloroplast"/>
    <property type="evidence" value="ECO:0007669"/>
    <property type="project" value="UniProtKB-SubCell"/>
</dbReference>
<dbReference type="GO" id="GO:0015934">
    <property type="term" value="C:large ribosomal subunit"/>
    <property type="evidence" value="ECO:0007669"/>
    <property type="project" value="InterPro"/>
</dbReference>
<dbReference type="GO" id="GO:0019843">
    <property type="term" value="F:rRNA binding"/>
    <property type="evidence" value="ECO:0007669"/>
    <property type="project" value="UniProtKB-UniRule"/>
</dbReference>
<dbReference type="GO" id="GO:0003735">
    <property type="term" value="F:structural constituent of ribosome"/>
    <property type="evidence" value="ECO:0007669"/>
    <property type="project" value="InterPro"/>
</dbReference>
<dbReference type="GO" id="GO:0006412">
    <property type="term" value="P:translation"/>
    <property type="evidence" value="ECO:0007669"/>
    <property type="project" value="UniProtKB-UniRule"/>
</dbReference>
<dbReference type="CDD" id="cd00336">
    <property type="entry name" value="Ribosomal_L22"/>
    <property type="match status" value="1"/>
</dbReference>
<dbReference type="FunFam" id="3.90.470.10:FF:000004">
    <property type="entry name" value="50S ribosomal protein L22, chloroplastic"/>
    <property type="match status" value="1"/>
</dbReference>
<dbReference type="Gene3D" id="3.90.470.10">
    <property type="entry name" value="Ribosomal protein L22/L17"/>
    <property type="match status" value="1"/>
</dbReference>
<dbReference type="HAMAP" id="MF_01331_B">
    <property type="entry name" value="Ribosomal_uL22_B"/>
    <property type="match status" value="1"/>
</dbReference>
<dbReference type="InterPro" id="IPR001063">
    <property type="entry name" value="Ribosomal_uL22"/>
</dbReference>
<dbReference type="InterPro" id="IPR005727">
    <property type="entry name" value="Ribosomal_uL22_bac/chlpt-type"/>
</dbReference>
<dbReference type="InterPro" id="IPR047867">
    <property type="entry name" value="Ribosomal_uL22_bac/org-type"/>
</dbReference>
<dbReference type="InterPro" id="IPR018260">
    <property type="entry name" value="Ribosomal_uL22_CS"/>
</dbReference>
<dbReference type="InterPro" id="IPR036394">
    <property type="entry name" value="Ribosomal_uL22_sf"/>
</dbReference>
<dbReference type="NCBIfam" id="TIGR01044">
    <property type="entry name" value="rplV_bact"/>
    <property type="match status" value="1"/>
</dbReference>
<dbReference type="PANTHER" id="PTHR13501">
    <property type="entry name" value="CHLOROPLAST 50S RIBOSOMAL PROTEIN L22-RELATED"/>
    <property type="match status" value="1"/>
</dbReference>
<dbReference type="PANTHER" id="PTHR13501:SF10">
    <property type="entry name" value="LARGE RIBOSOMAL SUBUNIT PROTEIN UL22M"/>
    <property type="match status" value="1"/>
</dbReference>
<dbReference type="Pfam" id="PF00237">
    <property type="entry name" value="Ribosomal_L22"/>
    <property type="match status" value="1"/>
</dbReference>
<dbReference type="SUPFAM" id="SSF54843">
    <property type="entry name" value="Ribosomal protein L22"/>
    <property type="match status" value="1"/>
</dbReference>
<dbReference type="PROSITE" id="PS00464">
    <property type="entry name" value="RIBOSOMAL_L22"/>
    <property type="match status" value="1"/>
</dbReference>
<accession>A9LYE0</accession>
<accession>A9QAR5</accession>
<gene>
    <name type="primary">rpl22</name>
</gene>
<keyword id="KW-0150">Chloroplast</keyword>
<keyword id="KW-0934">Plastid</keyword>
<keyword id="KW-0687">Ribonucleoprotein</keyword>
<keyword id="KW-0689">Ribosomal protein</keyword>
<keyword id="KW-0694">RNA-binding</keyword>
<keyword id="KW-0699">rRNA-binding</keyword>
<organism>
    <name type="scientific">Acorus calamus var. americanus</name>
    <name type="common">American sweet flag</name>
    <name type="synonym">Acorus americanus</name>
    <dbReference type="NCBI Taxonomy" id="263995"/>
    <lineage>
        <taxon>Eukaryota</taxon>
        <taxon>Viridiplantae</taxon>
        <taxon>Streptophyta</taxon>
        <taxon>Embryophyta</taxon>
        <taxon>Tracheophyta</taxon>
        <taxon>Spermatophyta</taxon>
        <taxon>Magnoliopsida</taxon>
        <taxon>Liliopsida</taxon>
        <taxon>Acoraceae</taxon>
        <taxon>Acorus</taxon>
    </lineage>
</organism>
<feature type="chain" id="PRO_0000354551" description="Large ribosomal subunit protein uL22c">
    <location>
        <begin position="1"/>
        <end position="127"/>
    </location>
</feature>
<protein>
    <recommendedName>
        <fullName evidence="2">Large ribosomal subunit protein uL22c</fullName>
    </recommendedName>
    <alternativeName>
        <fullName>50S ribosomal protein L22, chloroplastic</fullName>
    </alternativeName>
</protein>
<proteinExistence type="inferred from homology"/>
<name>RK22_ACOCI</name>
<geneLocation type="chloroplast"/>
<comment type="function">
    <text evidence="1">This protein binds specifically to 23S rRNA.</text>
</comment>
<comment type="function">
    <text evidence="1">The globular domain of the protein is located near the polypeptide exit tunnel on the outside of the subunit, while an extended beta-hairpin is found that lines the wall of the exit tunnel in the center of the 70S ribosome.</text>
</comment>
<comment type="subunit">
    <text evidence="1">Part of the 50S ribosomal subunit.</text>
</comment>
<comment type="subcellular location">
    <subcellularLocation>
        <location>Plastid</location>
        <location>Chloroplast</location>
    </subcellularLocation>
</comment>
<comment type="similarity">
    <text evidence="2">Belongs to the universal ribosomal protein uL22 family.</text>
</comment>
<sequence>MIKKNWITTGTEARALAQNISMSAYKARRVIDQIRGRSYEETIMILELMPYRASFPILKLVYSAAANAINNMGLSEADLFISKAEVNGGTFVKKLRPRARGRSYAIKRPTCHITIVLKDKDKSLLNE</sequence>
<evidence type="ECO:0000250" key="1"/>
<evidence type="ECO:0000305" key="2"/>
<reference key="1">
    <citation type="submission" date="2007-11" db="EMBL/GenBank/DDBJ databases">
        <title>The complete chloroplast genome of Acorus americanus.</title>
        <authorList>
            <person name="Peery R.M."/>
            <person name="Chumley T.W."/>
            <person name="Kuehl J.V."/>
            <person name="Boore J.L."/>
            <person name="Raubeson L.A."/>
        </authorList>
    </citation>
    <scope>NUCLEOTIDE SEQUENCE [LARGE SCALE GENOMIC DNA]</scope>
</reference>
<reference key="2">
    <citation type="journal article" date="2007" name="Proc. Natl. Acad. Sci. U.S.A.">
        <title>Analysis of 81 genes from 64 plastid genomes resolves relationships in angiosperms and identifies genome-scale evolutionary patterns.</title>
        <authorList>
            <person name="Jansen R.K."/>
            <person name="Cai Z."/>
            <person name="Raubeson L.A."/>
            <person name="Daniell H."/>
            <person name="dePamphilis C.W."/>
            <person name="Leebens-Mack J."/>
            <person name="Muller K.F."/>
            <person name="Guisinger-Bellian M."/>
            <person name="Haberle R.C."/>
            <person name="Hansen A.K."/>
            <person name="Chumley T.W."/>
            <person name="Lee S.B."/>
            <person name="Peery R."/>
            <person name="McNeal J.R."/>
            <person name="Kuehl J.V."/>
            <person name="Boore J.L."/>
        </authorList>
    </citation>
    <scope>NUCLEOTIDE SEQUENCE [GENOMIC DNA]</scope>
</reference>